<gene>
    <name evidence="3" type="primary">oxd</name>
</gene>
<evidence type="ECO:0000250" key="1">
    <source>
        <dbReference type="UniProtKB" id="Q76K71"/>
    </source>
</evidence>
<evidence type="ECO:0000269" key="2">
    <source>
    </source>
</evidence>
<evidence type="ECO:0000303" key="3">
    <source>
    </source>
</evidence>
<evidence type="ECO:0000305" key="4"/>
<evidence type="ECO:0000305" key="5">
    <source>
    </source>
</evidence>
<dbReference type="EC" id="4.8.1.2" evidence="2"/>
<dbReference type="EMBL" id="AB193508">
    <property type="protein sequence ID" value="BAD98528.1"/>
    <property type="molecule type" value="Genomic_DNA"/>
</dbReference>
<dbReference type="SMR" id="Q4W7T3"/>
<dbReference type="BRENDA" id="4.99.1.5">
    <property type="organism ID" value="5085"/>
</dbReference>
<dbReference type="GO" id="GO:0016829">
    <property type="term" value="F:lyase activity"/>
    <property type="evidence" value="ECO:0007669"/>
    <property type="project" value="UniProtKB-KW"/>
</dbReference>
<dbReference type="GO" id="GO:0046872">
    <property type="term" value="F:metal ion binding"/>
    <property type="evidence" value="ECO:0007669"/>
    <property type="project" value="UniProtKB-KW"/>
</dbReference>
<dbReference type="InterPro" id="IPR011008">
    <property type="entry name" value="Dimeric_a/b-barrel"/>
</dbReference>
<dbReference type="InterPro" id="IPR025702">
    <property type="entry name" value="OXD"/>
</dbReference>
<dbReference type="Pfam" id="PF13816">
    <property type="entry name" value="Dehydratase_hem"/>
    <property type="match status" value="1"/>
</dbReference>
<dbReference type="SUPFAM" id="SSF54909">
    <property type="entry name" value="Dimeric alpha+beta barrel"/>
    <property type="match status" value="1"/>
</dbReference>
<name>OXD_PSESP</name>
<keyword id="KW-0349">Heme</keyword>
<keyword id="KW-0408">Iron</keyword>
<keyword id="KW-0456">Lyase</keyword>
<keyword id="KW-0479">Metal-binding</keyword>
<comment type="function">
    <text evidence="2">Catalyzes the dehydration of aldoximes to their corresponding nitrile (PubMed:16003557). Is active toward various arylalkyl- and alkyl-aldoximes, but cannot use aryl-aldoximes (PubMed:16003557). Involved in aldoxime metabolism via the aldoxime-nitrile pathway (PubMed:16003557).</text>
</comment>
<comment type="catalytic activity">
    <reaction evidence="2">
        <text>an aliphatic aldoxime = a nitrile + H2O</text>
        <dbReference type="Rhea" id="RHEA:11316"/>
        <dbReference type="ChEBI" id="CHEBI:15377"/>
        <dbReference type="ChEBI" id="CHEBI:18379"/>
        <dbReference type="ChEBI" id="CHEBI:82744"/>
        <dbReference type="EC" id="4.8.1.2"/>
    </reaction>
    <physiologicalReaction direction="left-to-right" evidence="2">
        <dbReference type="Rhea" id="RHEA:11317"/>
    </physiologicalReaction>
</comment>
<comment type="cofactor">
    <cofactor evidence="5">
        <name>heme b</name>
        <dbReference type="ChEBI" id="CHEBI:60344"/>
    </cofactor>
</comment>
<comment type="activity regulation">
    <text evidence="5">Active when the heme iron is in the ferrous state.</text>
</comment>
<comment type="biophysicochemical properties">
    <kinetics>
        <KM evidence="2">0.991 mM for Z-phenylacetaldoxime</KM>
        <KM evidence="2">4.07 mM for E/Z-2-phenylpropionaldoxime</KM>
        <KM evidence="2">0.975 mM for Z-3-phenylpropionaldoxime</KM>
        <KM evidence="2">0.882 mM for E/Z-4-phenybutyraldoxime</KM>
        <KM evidence="2">0.778 mM for E/Z-propionaldoxime</KM>
        <KM evidence="2">2.16 mM for E/Z-n-butyraldoxime</KM>
        <KM evidence="2">0.538 mM for E/Z-isobutyraldoxime</KM>
        <KM evidence="2">3.78 mM for E/Z-n-valeraldoxime</KM>
        <KM evidence="2">1.33 mM for E/Z-isovaleraldoxime</KM>
        <KM evidence="2">3.12 mM for E/Z-n-capronaldoxime</KM>
        <KM evidence="2">5.96 mM for E/Z-cyclohexanecarboxaldehyde oxime</KM>
        <Vmax evidence="2">2.61 umol/min/mg enzyme with Z-phenylacetaldoxime as substrate</Vmax>
        <Vmax evidence="2">6.93 umol/min/mg enzyme with E/Z-2-phenylpropionaldoxime as substrate</Vmax>
        <Vmax evidence="2">12.1 umol/min/mg enzyme with Z-3-phenylpropionaldoxime as substrate</Vmax>
        <Vmax evidence="2">2.53 umol/min/mg enzyme with E/Z-4-phenybutyraldoxime as substrate</Vmax>
        <Vmax evidence="2">2.9 umol/min/mg enzyme with E/Z-propionaldoxime as substrate</Vmax>
        <Vmax evidence="2">14.8 umol/min/mg enzyme with E/Z-n-butyraldoxime as substrate</Vmax>
        <Vmax evidence="2">5.87 umol/min/mg enzyme with E/Z-isobutyraldoxime as substrate</Vmax>
        <Vmax evidence="2">19.9 umol/min/mg enzyme with E/Z-n-valeraldoxime as substrate</Vmax>
        <Vmax evidence="2">35.1 umol/min/mg enzyme with E/Z-isovaleraldoxime as substrate</Vmax>
        <Vmax evidence="2">15.3 umol/min/mg enzyme with E/Z-n-capronaldoxime as substrate</Vmax>
        <Vmax evidence="2">16.8 umol/min/mg enzyme with E/Z-cyclohexanecarboxaldehyde oxime as substrate</Vmax>
    </kinetics>
    <phDependence>
        <text evidence="2">Optimum pH is 7.0.</text>
    </phDependence>
    <temperatureDependence>
        <text evidence="2">Optimum temperature is 30 degrees Celsius.</text>
    </temperatureDependence>
</comment>
<comment type="subunit">
    <text evidence="2">Homodimer.</text>
</comment>
<comment type="similarity">
    <text evidence="4">Belongs to the heme-containing dehydratase family.</text>
</comment>
<feature type="chain" id="PRO_0000456623" description="Aliphatic aldoxime dehydratase">
    <location>
        <begin position="1"/>
        <end position="352"/>
    </location>
</feature>
<feature type="active site" evidence="1">
    <location>
        <position position="320"/>
    </location>
</feature>
<feature type="binding site" evidence="1">
    <location>
        <position position="219"/>
    </location>
    <ligand>
        <name>an aliphatic aldoxime</name>
        <dbReference type="ChEBI" id="CHEBI:82744"/>
    </ligand>
</feature>
<feature type="binding site" description="axial binding residue" evidence="1">
    <location>
        <position position="299"/>
    </location>
    <ligand>
        <name>heme b</name>
        <dbReference type="ChEBI" id="CHEBI:60344"/>
    </ligand>
    <ligandPart>
        <name>Fe</name>
        <dbReference type="ChEBI" id="CHEBI:18248"/>
    </ligandPart>
</feature>
<feature type="binding site" evidence="1">
    <location>
        <position position="320"/>
    </location>
    <ligand>
        <name>an aliphatic aldoxime</name>
        <dbReference type="ChEBI" id="CHEBI:82744"/>
    </ligand>
</feature>
<protein>
    <recommendedName>
        <fullName evidence="4">Aliphatic aldoxime dehydratase</fullName>
        <ecNumber evidence="2">4.8.1.2</ecNumber>
    </recommendedName>
    <alternativeName>
        <fullName evidence="3">Aldoxime dehydratase</fullName>
    </alternativeName>
    <alternativeName>
        <fullName evidence="3">OxdK</fullName>
    </alternativeName>
</protein>
<reference key="1">
    <citation type="journal article" date="2005" name="FEMS Microbiol. Lett.">
        <title>Polymerase chain reaction for identification of aldoxime dehydratase in aldoxime- or nitrile-degrading microorganisms.</title>
        <authorList>
            <person name="Kato Y."/>
            <person name="Yoshida S."/>
            <person name="Asano Y."/>
        </authorList>
    </citation>
    <scope>NUCLEOTIDE SEQUENCE [GENOMIC DNA]</scope>
    <source>
        <strain>K-9</strain>
    </source>
</reference>
<reference key="2">
    <citation type="journal article" date="2006" name="Appl. Microbiol. Biotechnol.">
        <title>Molecular and enzymatic analysis of the 'aldoxime-nitrile pathway' in the glutaronitrile degrader Pseudomonas sp. K-9.</title>
        <authorList>
            <person name="Kato Y."/>
            <person name="Asano Y."/>
        </authorList>
    </citation>
    <scope>FUNCTION</scope>
    <scope>CATALYTIC ACTIVITY</scope>
    <scope>COFACTOR</scope>
    <scope>BIOPHYSICOCHEMICAL PROPERTIES</scope>
    <scope>SUBUNIT</scope>
    <source>
        <strain>K-9</strain>
    </source>
</reference>
<proteinExistence type="evidence at protein level"/>
<sequence>MESAIDTHLKCPRTLSRRVPDEYQPPFAMWMARADEHLEQVVMAYFGVQYRGEAQRAAALQAMRHIVESFSLADGPQTHDLTHHTDNSGFDNLIVVGYWKDPAAHCRWLRSAPVNAWWASEDRLNDGLGYFREISAPRAEQFETLYAFQDNLPGVGAVMDRISGEIEEHGYWGSMRDRFPISQTDWMKPTSELQVIAGDPAKGGRVVVLGHGNLTLIRSGQDWADAEAEERSLYLDEILPTLQDGMDFLRDNGQPLGCYSNRFVRNIDLDGNFLDVSYNIGHWRSVEKLERWTESHPTHLRIFVTFFRVAAGLKKLRLYHEVSVSDAKSQIFGYINCHPQTGMLRDAQVSPA</sequence>
<accession>Q4W7T3</accession>
<organism>
    <name type="scientific">Pseudomonas sp</name>
    <dbReference type="NCBI Taxonomy" id="306"/>
    <lineage>
        <taxon>Bacteria</taxon>
        <taxon>Pseudomonadati</taxon>
        <taxon>Pseudomonadota</taxon>
        <taxon>Gammaproteobacteria</taxon>
        <taxon>Pseudomonadales</taxon>
        <taxon>Pseudomonadaceae</taxon>
        <taxon>Pseudomonas</taxon>
    </lineage>
</organism>